<feature type="chain" id="PRO_0000342480" description="GDP-mannose pyrophosphatase">
    <location>
        <begin position="1"/>
        <end position="191"/>
    </location>
</feature>
<feature type="domain" description="Nudix hydrolase" evidence="2">
    <location>
        <begin position="43"/>
        <end position="180"/>
    </location>
</feature>
<feature type="short sequence motif" description="Nudix box">
    <location>
        <begin position="86"/>
        <end position="106"/>
    </location>
</feature>
<feature type="binding site" description="in other chain" evidence="1">
    <location>
        <position position="17"/>
    </location>
    <ligand>
        <name>GDP-alpha-D-mannose</name>
        <dbReference type="ChEBI" id="CHEBI:57527"/>
        <note>ligand shared between dimeric partners</note>
    </ligand>
</feature>
<feature type="binding site" evidence="1">
    <location>
        <begin position="38"/>
        <end position="40"/>
    </location>
    <ligand>
        <name>GDP-alpha-D-mannose</name>
        <dbReference type="ChEBI" id="CHEBI:57527"/>
        <note>ligand shared between dimeric partners</note>
    </ligand>
</feature>
<feature type="binding site" description="in other chain" evidence="1">
    <location>
        <position position="67"/>
    </location>
    <ligand>
        <name>GDP-alpha-D-mannose</name>
        <dbReference type="ChEBI" id="CHEBI:57527"/>
        <note>ligand shared between dimeric partners</note>
    </ligand>
</feature>
<feature type="binding site" description="in other chain" evidence="1">
    <location>
        <begin position="85"/>
        <end position="87"/>
    </location>
    <ligand>
        <name>GDP-alpha-D-mannose</name>
        <dbReference type="ChEBI" id="CHEBI:57527"/>
        <note>ligand shared between dimeric partners</note>
    </ligand>
</feature>
<feature type="binding site" evidence="1">
    <location>
        <position position="85"/>
    </location>
    <ligand>
        <name>Mg(2+)</name>
        <dbReference type="ChEBI" id="CHEBI:18420"/>
        <label>1</label>
    </ligand>
</feature>
<feature type="binding site" evidence="1">
    <location>
        <position position="100"/>
    </location>
    <ligand>
        <name>Mg(2+)</name>
        <dbReference type="ChEBI" id="CHEBI:18420"/>
        <label>2</label>
    </ligand>
</feature>
<feature type="binding site" description="in other chain" evidence="1">
    <location>
        <position position="104"/>
    </location>
    <ligand>
        <name>GDP-alpha-D-mannose</name>
        <dbReference type="ChEBI" id="CHEBI:57527"/>
        <note>ligand shared between dimeric partners</note>
    </ligand>
</feature>
<feature type="binding site" evidence="1">
    <location>
        <position position="104"/>
    </location>
    <ligand>
        <name>Mg(2+)</name>
        <dbReference type="ChEBI" id="CHEBI:18420"/>
        <label>1</label>
    </ligand>
</feature>
<feature type="binding site" evidence="1">
    <location>
        <position position="104"/>
    </location>
    <ligand>
        <name>Mg(2+)</name>
        <dbReference type="ChEBI" id="CHEBI:18420"/>
        <label>2</label>
    </ligand>
</feature>
<feature type="binding site" description="in other chain" evidence="1">
    <location>
        <position position="127"/>
    </location>
    <ligand>
        <name>GDP-alpha-D-mannose</name>
        <dbReference type="ChEBI" id="CHEBI:57527"/>
        <note>ligand shared between dimeric partners</note>
    </ligand>
</feature>
<feature type="binding site" description="in other chain" evidence="1">
    <location>
        <begin position="150"/>
        <end position="151"/>
    </location>
    <ligand>
        <name>GDP-alpha-D-mannose</name>
        <dbReference type="ChEBI" id="CHEBI:57527"/>
        <note>ligand shared between dimeric partners</note>
    </ligand>
</feature>
<feature type="binding site" evidence="1">
    <location>
        <position position="151"/>
    </location>
    <ligand>
        <name>Mg(2+)</name>
        <dbReference type="ChEBI" id="CHEBI:18420"/>
        <label>2</label>
    </ligand>
</feature>
<feature type="binding site" description="in other chain" evidence="1">
    <location>
        <position position="176"/>
    </location>
    <ligand>
        <name>GDP-alpha-D-mannose</name>
        <dbReference type="ChEBI" id="CHEBI:57527"/>
        <note>ligand shared between dimeric partners</note>
    </ligand>
</feature>
<name>NUDK_ENT38</name>
<comment type="function">
    <text evidence="1">Nucleoside diphosphate sugar hydrolase that hydrolyzes GDP-mannose as its preferred substrate, yielding GMP and mannose-1-phosphate.</text>
</comment>
<comment type="catalytic activity">
    <reaction evidence="1">
        <text>GDP-alpha-D-mannose + H2O = alpha-D-mannose 1-phosphate + GMP + 2 H(+)</text>
        <dbReference type="Rhea" id="RHEA:27978"/>
        <dbReference type="ChEBI" id="CHEBI:15377"/>
        <dbReference type="ChEBI" id="CHEBI:15378"/>
        <dbReference type="ChEBI" id="CHEBI:57527"/>
        <dbReference type="ChEBI" id="CHEBI:58115"/>
        <dbReference type="ChEBI" id="CHEBI:58409"/>
    </reaction>
</comment>
<comment type="cofactor">
    <cofactor evidence="1">
        <name>Mg(2+)</name>
        <dbReference type="ChEBI" id="CHEBI:18420"/>
    </cofactor>
</comment>
<comment type="subunit">
    <text evidence="1">Homodimer.</text>
</comment>
<comment type="domain">
    <text evidence="1">In the dimer, the N-terminal domains are swapped between the two monomers, such that residues of both chains contribute to the active site.</text>
</comment>
<comment type="similarity">
    <text evidence="3">Belongs to the Nudix hydrolase family. NudK subfamily.</text>
</comment>
<protein>
    <recommendedName>
        <fullName>GDP-mannose pyrophosphatase</fullName>
        <ecNumber evidence="1">3.6.1.-</ecNumber>
    </recommendedName>
    <alternativeName>
        <fullName>GDP-mannose hydrolase</fullName>
    </alternativeName>
    <alternativeName>
        <fullName>GDPMK</fullName>
    </alternativeName>
</protein>
<reference key="1">
    <citation type="journal article" date="2010" name="PLoS Genet.">
        <title>Genome sequence of the plant growth promoting endophytic bacterium Enterobacter sp. 638.</title>
        <authorList>
            <person name="Taghavi S."/>
            <person name="van der Lelie D."/>
            <person name="Hoffman A."/>
            <person name="Zhang Y.B."/>
            <person name="Walla M.D."/>
            <person name="Vangronsveld J."/>
            <person name="Newman L."/>
            <person name="Monchy S."/>
        </authorList>
    </citation>
    <scope>NUCLEOTIDE SEQUENCE [LARGE SCALE GENOMIC DNA]</scope>
    <source>
        <strain>638</strain>
    </source>
</reference>
<evidence type="ECO:0000250" key="1">
    <source>
        <dbReference type="UniProtKB" id="P37128"/>
    </source>
</evidence>
<evidence type="ECO:0000255" key="2">
    <source>
        <dbReference type="PROSITE-ProRule" id="PRU00794"/>
    </source>
</evidence>
<evidence type="ECO:0000305" key="3"/>
<accession>A4WD46</accession>
<proteinExistence type="inferred from homology"/>
<dbReference type="EC" id="3.6.1.-" evidence="1"/>
<dbReference type="EMBL" id="CP000653">
    <property type="protein sequence ID" value="ABP61626.1"/>
    <property type="molecule type" value="Genomic_DNA"/>
</dbReference>
<dbReference type="RefSeq" id="WP_015959958.1">
    <property type="nucleotide sequence ID" value="NC_009436.1"/>
</dbReference>
<dbReference type="SMR" id="A4WD46"/>
<dbReference type="STRING" id="399742.Ent638_2962"/>
<dbReference type="KEGG" id="ent:Ent638_2962"/>
<dbReference type="eggNOG" id="COG0494">
    <property type="taxonomic scope" value="Bacteria"/>
</dbReference>
<dbReference type="HOGENOM" id="CLU_062658_6_0_6"/>
<dbReference type="OrthoDB" id="5292471at2"/>
<dbReference type="Proteomes" id="UP000000230">
    <property type="component" value="Chromosome"/>
</dbReference>
<dbReference type="GO" id="GO:0005829">
    <property type="term" value="C:cytosol"/>
    <property type="evidence" value="ECO:0007669"/>
    <property type="project" value="TreeGrafter"/>
</dbReference>
<dbReference type="GO" id="GO:0016818">
    <property type="term" value="F:hydrolase activity, acting on acid anhydrides, in phosphorus-containing anhydrides"/>
    <property type="evidence" value="ECO:0007669"/>
    <property type="project" value="InterPro"/>
</dbReference>
<dbReference type="GO" id="GO:0046872">
    <property type="term" value="F:metal ion binding"/>
    <property type="evidence" value="ECO:0007669"/>
    <property type="project" value="UniProtKB-KW"/>
</dbReference>
<dbReference type="GO" id="GO:0006753">
    <property type="term" value="P:nucleoside phosphate metabolic process"/>
    <property type="evidence" value="ECO:0007669"/>
    <property type="project" value="TreeGrafter"/>
</dbReference>
<dbReference type="GO" id="GO:0019693">
    <property type="term" value="P:ribose phosphate metabolic process"/>
    <property type="evidence" value="ECO:0007669"/>
    <property type="project" value="TreeGrafter"/>
</dbReference>
<dbReference type="CDD" id="cd24157">
    <property type="entry name" value="NUDIX_GDPMK"/>
    <property type="match status" value="1"/>
</dbReference>
<dbReference type="FunFam" id="3.90.79.10:FF:000010">
    <property type="entry name" value="GDP-mannose pyrophosphatase NudK"/>
    <property type="match status" value="1"/>
</dbReference>
<dbReference type="Gene3D" id="3.90.79.10">
    <property type="entry name" value="Nucleoside Triphosphate Pyrophosphohydrolase"/>
    <property type="match status" value="1"/>
</dbReference>
<dbReference type="InterPro" id="IPR004385">
    <property type="entry name" value="NDP_pyrophosphatase"/>
</dbReference>
<dbReference type="InterPro" id="IPR015797">
    <property type="entry name" value="NUDIX_hydrolase-like_dom_sf"/>
</dbReference>
<dbReference type="InterPro" id="IPR000086">
    <property type="entry name" value="NUDIX_hydrolase_dom"/>
</dbReference>
<dbReference type="NCBIfam" id="TIGR00052">
    <property type="entry name" value="nudix-type nucleoside diphosphatase, YffH/AdpP family"/>
    <property type="match status" value="1"/>
</dbReference>
<dbReference type="NCBIfam" id="NF011585">
    <property type="entry name" value="PRK15009.1"/>
    <property type="match status" value="1"/>
</dbReference>
<dbReference type="PANTHER" id="PTHR11839:SF18">
    <property type="entry name" value="NUDIX HYDROLASE DOMAIN-CONTAINING PROTEIN"/>
    <property type="match status" value="1"/>
</dbReference>
<dbReference type="PANTHER" id="PTHR11839">
    <property type="entry name" value="UDP/ADP-SUGAR PYROPHOSPHATASE"/>
    <property type="match status" value="1"/>
</dbReference>
<dbReference type="Pfam" id="PF00293">
    <property type="entry name" value="NUDIX"/>
    <property type="match status" value="1"/>
</dbReference>
<dbReference type="SUPFAM" id="SSF55811">
    <property type="entry name" value="Nudix"/>
    <property type="match status" value="1"/>
</dbReference>
<dbReference type="PROSITE" id="PS51462">
    <property type="entry name" value="NUDIX"/>
    <property type="match status" value="1"/>
</dbReference>
<keyword id="KW-0378">Hydrolase</keyword>
<keyword id="KW-0460">Magnesium</keyword>
<keyword id="KW-0479">Metal-binding</keyword>
<sequence>MSLKIEIIKDKILSDNYFVLRNITYDLTRKNGEVIRHKREVYDRGNGATILLYNREKQSVVLIRQFRVATWVNGNPDGRLIETCAGLLDNDAPEVCIRKEAIEETGFAVGEVKKLFELYMSPGGVTELVYFFIAEYTDAQRANAGGGVEDEDIDVLEIPFEQALEMIKTGEIQDGKALILLQYLQISGLMA</sequence>
<gene>
    <name type="primary">nudK</name>
    <name type="ordered locus">Ent638_2962</name>
</gene>
<organism>
    <name type="scientific">Enterobacter sp. (strain 638)</name>
    <dbReference type="NCBI Taxonomy" id="399742"/>
    <lineage>
        <taxon>Bacteria</taxon>
        <taxon>Pseudomonadati</taxon>
        <taxon>Pseudomonadota</taxon>
        <taxon>Gammaproteobacteria</taxon>
        <taxon>Enterobacterales</taxon>
        <taxon>Enterobacteriaceae</taxon>
        <taxon>Enterobacter</taxon>
    </lineage>
</organism>